<comment type="function">
    <text evidence="1">Binds double-stranded RNA.</text>
</comment>
<reference key="1">
    <citation type="journal article" date="2005" name="BMC Biol.">
        <title>The sequence of rice chromosomes 11 and 12, rich in disease resistance genes and recent gene duplications.</title>
        <authorList>
            <consortium name="The rice chromosomes 11 and 12 sequencing consortia"/>
        </authorList>
    </citation>
    <scope>NUCLEOTIDE SEQUENCE [LARGE SCALE GENOMIC DNA]</scope>
    <source>
        <strain>cv. Nipponbare</strain>
    </source>
</reference>
<reference key="2">
    <citation type="journal article" date="2005" name="Nature">
        <title>The map-based sequence of the rice genome.</title>
        <authorList>
            <consortium name="International rice genome sequencing project (IRGSP)"/>
        </authorList>
    </citation>
    <scope>NUCLEOTIDE SEQUENCE [LARGE SCALE GENOMIC DNA]</scope>
    <source>
        <strain>cv. Nipponbare</strain>
    </source>
</reference>
<reference key="3">
    <citation type="journal article" date="2008" name="Nucleic Acids Res.">
        <title>The rice annotation project database (RAP-DB): 2008 update.</title>
        <authorList>
            <consortium name="The rice annotation project (RAP)"/>
        </authorList>
    </citation>
    <scope>GENOME REANNOTATION</scope>
    <source>
        <strain>cv. Nipponbare</strain>
    </source>
</reference>
<reference key="4">
    <citation type="journal article" date="2013" name="Rice">
        <title>Improvement of the Oryza sativa Nipponbare reference genome using next generation sequence and optical map data.</title>
        <authorList>
            <person name="Kawahara Y."/>
            <person name="de la Bastide M."/>
            <person name="Hamilton J.P."/>
            <person name="Kanamori H."/>
            <person name="McCombie W.R."/>
            <person name="Ouyang S."/>
            <person name="Schwartz D.C."/>
            <person name="Tanaka T."/>
            <person name="Wu J."/>
            <person name="Zhou S."/>
            <person name="Childs K.L."/>
            <person name="Davidson R.M."/>
            <person name="Lin H."/>
            <person name="Quesada-Ocampo L."/>
            <person name="Vaillancourt B."/>
            <person name="Sakai H."/>
            <person name="Lee S.S."/>
            <person name="Kim J."/>
            <person name="Numa H."/>
            <person name="Itoh T."/>
            <person name="Buell C.R."/>
            <person name="Matsumoto T."/>
        </authorList>
    </citation>
    <scope>GENOME REANNOTATION</scope>
    <source>
        <strain>cv. Nipponbare</strain>
    </source>
</reference>
<reference key="5">
    <citation type="journal article" date="2003" name="Science">
        <title>Collection, mapping, and annotation of over 28,000 cDNA clones from japonica rice.</title>
        <authorList>
            <consortium name="The rice full-length cDNA consortium"/>
        </authorList>
    </citation>
    <scope>NUCLEOTIDE SEQUENCE [LARGE SCALE MRNA]</scope>
    <source>
        <strain>cv. Nipponbare</strain>
    </source>
</reference>
<keyword id="KW-1185">Reference proteome</keyword>
<keyword id="KW-0677">Repeat</keyword>
<keyword id="KW-0694">RNA-binding</keyword>
<feature type="chain" id="PRO_0000404684" description="Double-stranded RNA-binding protein 7">
    <location>
        <begin position="1"/>
        <end position="473"/>
    </location>
</feature>
<feature type="domain" description="DRBM 1" evidence="2">
    <location>
        <begin position="33"/>
        <end position="102"/>
    </location>
</feature>
<feature type="domain" description="DRBM 2" evidence="2">
    <location>
        <begin position="118"/>
        <end position="185"/>
    </location>
</feature>
<feature type="region of interest" description="Disordered" evidence="3">
    <location>
        <begin position="1"/>
        <end position="22"/>
    </location>
</feature>
<feature type="region of interest" description="Disordered" evidence="3">
    <location>
        <begin position="286"/>
        <end position="329"/>
    </location>
</feature>
<feature type="region of interest" description="Disordered" evidence="3">
    <location>
        <begin position="393"/>
        <end position="473"/>
    </location>
</feature>
<feature type="compositionally biased region" description="Pro residues" evidence="3">
    <location>
        <begin position="1"/>
        <end position="10"/>
    </location>
</feature>
<feature type="compositionally biased region" description="Basic and acidic residues" evidence="3">
    <location>
        <begin position="286"/>
        <end position="307"/>
    </location>
</feature>
<feature type="compositionally biased region" description="Basic and acidic residues" evidence="3">
    <location>
        <begin position="317"/>
        <end position="327"/>
    </location>
</feature>
<feature type="compositionally biased region" description="Basic and acidic residues" evidence="3">
    <location>
        <begin position="416"/>
        <end position="427"/>
    </location>
</feature>
<feature type="compositionally biased region" description="Polar residues" evidence="3">
    <location>
        <begin position="433"/>
        <end position="450"/>
    </location>
</feature>
<organism>
    <name type="scientific">Oryza sativa subsp. japonica</name>
    <name type="common">Rice</name>
    <dbReference type="NCBI Taxonomy" id="39947"/>
    <lineage>
        <taxon>Eukaryota</taxon>
        <taxon>Viridiplantae</taxon>
        <taxon>Streptophyta</taxon>
        <taxon>Embryophyta</taxon>
        <taxon>Tracheophyta</taxon>
        <taxon>Spermatophyta</taxon>
        <taxon>Magnoliopsida</taxon>
        <taxon>Liliopsida</taxon>
        <taxon>Poales</taxon>
        <taxon>Poaceae</taxon>
        <taxon>BOP clade</taxon>
        <taxon>Oryzoideae</taxon>
        <taxon>Oryzeae</taxon>
        <taxon>Oryzinae</taxon>
        <taxon>Oryza</taxon>
        <taxon>Oryza sativa</taxon>
    </lineage>
</organism>
<proteinExistence type="evidence at transcript level"/>
<evidence type="ECO:0000250" key="1"/>
<evidence type="ECO:0000255" key="2">
    <source>
        <dbReference type="PROSITE-ProRule" id="PRU00266"/>
    </source>
</evidence>
<evidence type="ECO:0000256" key="3">
    <source>
        <dbReference type="SAM" id="MobiDB-lite"/>
    </source>
</evidence>
<accession>Q0IV63</accession>
<accession>H2KWB7</accession>
<gene>
    <name type="primary">DRB7</name>
    <name type="ordered locus">Os11g0109900</name>
    <name type="ordered locus">LOC_Os11g01869</name>
</gene>
<dbReference type="EMBL" id="DP000010">
    <property type="protein sequence ID" value="ABG22335.1"/>
    <property type="molecule type" value="Genomic_DNA"/>
</dbReference>
<dbReference type="EMBL" id="AP008217">
    <property type="protein sequence ID" value="BAF27402.1"/>
    <property type="molecule type" value="Genomic_DNA"/>
</dbReference>
<dbReference type="EMBL" id="AP014967">
    <property type="protein sequence ID" value="BAT12358.1"/>
    <property type="molecule type" value="Genomic_DNA"/>
</dbReference>
<dbReference type="EMBL" id="AK063961">
    <property type="protein sequence ID" value="BAG88937.1"/>
    <property type="molecule type" value="mRNA"/>
</dbReference>
<dbReference type="EMBL" id="AK121852">
    <property type="protein sequence ID" value="BAH00690.1"/>
    <property type="molecule type" value="mRNA"/>
</dbReference>
<dbReference type="RefSeq" id="XP_015617485.1">
    <property type="nucleotide sequence ID" value="XM_015761999.1"/>
</dbReference>
<dbReference type="SMR" id="Q0IV63"/>
<dbReference type="FunCoup" id="Q0IV63">
    <property type="interactions" value="1"/>
</dbReference>
<dbReference type="STRING" id="39947.Q0IV63"/>
<dbReference type="PaxDb" id="39947-Q0IV63"/>
<dbReference type="EnsemblPlants" id="Os11t0109900-01">
    <property type="protein sequence ID" value="Os11t0109900-01"/>
    <property type="gene ID" value="Os11g0109900"/>
</dbReference>
<dbReference type="Gramene" id="Os11t0109900-01">
    <property type="protein sequence ID" value="Os11t0109900-01"/>
    <property type="gene ID" value="Os11g0109900"/>
</dbReference>
<dbReference type="KEGG" id="dosa:Os11g0109900"/>
<dbReference type="eggNOG" id="ENOG502QV9N">
    <property type="taxonomic scope" value="Eukaryota"/>
</dbReference>
<dbReference type="HOGENOM" id="CLU_034148_0_0_1"/>
<dbReference type="InParanoid" id="Q0IV63"/>
<dbReference type="OMA" id="NDQESEW"/>
<dbReference type="OrthoDB" id="1904943at2759"/>
<dbReference type="Proteomes" id="UP000000763">
    <property type="component" value="Chromosome 11"/>
</dbReference>
<dbReference type="Proteomes" id="UP000059680">
    <property type="component" value="Chromosome 11"/>
</dbReference>
<dbReference type="GO" id="GO:0005634">
    <property type="term" value="C:nucleus"/>
    <property type="evidence" value="ECO:0000318"/>
    <property type="project" value="GO_Central"/>
</dbReference>
<dbReference type="GO" id="GO:0003725">
    <property type="term" value="F:double-stranded RNA binding"/>
    <property type="evidence" value="ECO:0000318"/>
    <property type="project" value="GO_Central"/>
</dbReference>
<dbReference type="GO" id="GO:0004525">
    <property type="term" value="F:ribonuclease III activity"/>
    <property type="evidence" value="ECO:0000318"/>
    <property type="project" value="GO_Central"/>
</dbReference>
<dbReference type="GO" id="GO:0010468">
    <property type="term" value="P:regulation of gene expression"/>
    <property type="evidence" value="ECO:0000318"/>
    <property type="project" value="GO_Central"/>
</dbReference>
<dbReference type="GO" id="GO:0006396">
    <property type="term" value="P:RNA processing"/>
    <property type="evidence" value="ECO:0000318"/>
    <property type="project" value="GO_Central"/>
</dbReference>
<dbReference type="FunFam" id="3.30.160.20:FF:000048">
    <property type="entry name" value="Double-stranded RNA-binding protein 1"/>
    <property type="match status" value="1"/>
</dbReference>
<dbReference type="FunFam" id="3.30.160.20:FF:000047">
    <property type="entry name" value="double-stranded RNA-binding protein 1"/>
    <property type="match status" value="1"/>
</dbReference>
<dbReference type="Gene3D" id="3.30.160.20">
    <property type="match status" value="2"/>
</dbReference>
<dbReference type="InterPro" id="IPR014720">
    <property type="entry name" value="dsRBD_dom"/>
</dbReference>
<dbReference type="PANTHER" id="PTHR11207:SF1">
    <property type="entry name" value="DOUBLE-STRANDED RNA-BINDING PROTEIN 1"/>
    <property type="match status" value="1"/>
</dbReference>
<dbReference type="PANTHER" id="PTHR11207">
    <property type="entry name" value="RIBONUCLEASE III"/>
    <property type="match status" value="1"/>
</dbReference>
<dbReference type="Pfam" id="PF00035">
    <property type="entry name" value="dsrm"/>
    <property type="match status" value="2"/>
</dbReference>
<dbReference type="SMART" id="SM00358">
    <property type="entry name" value="DSRM"/>
    <property type="match status" value="2"/>
</dbReference>
<dbReference type="SUPFAM" id="SSF54768">
    <property type="entry name" value="dsRNA-binding domain-like"/>
    <property type="match status" value="2"/>
</dbReference>
<dbReference type="PROSITE" id="PS50137">
    <property type="entry name" value="DS_RBD"/>
    <property type="match status" value="2"/>
</dbReference>
<sequence length="473" mass="51203">MDMPPTPLPPETANTSPAPNGATAGIRVENCYVFKSRLQEYAQKAGLQTPEYHTFKEGPSHEPVFKSTVVINNTSYDSLPGFFNRKAAEQSAAEVALMEIVKSIPANANIPAVQETGLCKNLLQEYAQKMNYAIPSYICTKSASGLAPFICTVEIGGIQYIGAAARTKKDAEIKAARTALLAIQGQSEGSANGATKYIVVPGKRVGKEVEKMPIETPKPLKIKKGGFKKKWNKRKFMKKDGQAVVEKDEARVAGDAHDSDVLMQPTVITQEASCGTLFLQPCEEAKRVEAEPPRDIEMVQPDKENQHSDAALVQPDDEARVEQEPSRDISVVPPNEEAISVKQEPSIDAAILQPKEEASSVKQEPFIDTAMLQACKEAGSVELGPARDTVISQLNEQDRGVKQEPAGDTAVPQPDVDARVVKEESPRTEPNGEATNMKETPKNSAVCNSPETKEFGDITAMGSDPPATNMSEE</sequence>
<protein>
    <recommendedName>
        <fullName>Double-stranded RNA-binding protein 7</fullName>
    </recommendedName>
    <alternativeName>
        <fullName>dsRNA-binding protein 7</fullName>
    </alternativeName>
</protein>
<name>DRB7_ORYSJ</name>